<gene>
    <name evidence="1" type="primary">rpsM</name>
    <name type="ordered locus">BQ08010</name>
</gene>
<name>RS13_BARQU</name>
<protein>
    <recommendedName>
        <fullName evidence="1">Small ribosomal subunit protein uS13</fullName>
    </recommendedName>
    <alternativeName>
        <fullName evidence="3">30S ribosomal protein S13</fullName>
    </alternativeName>
</protein>
<proteinExistence type="inferred from homology"/>
<sequence>MARIAGVNIPTNKRVVIALQYIHGIGPRFAQEITKKVGIPVGRRVCELSDAEVLQIREAIDQGYKVEGDLRREVAVNVKRLMDLGCYRGLRHRRSLPVRGQRTHTNARTRKGPAKAIAGKKK</sequence>
<dbReference type="EMBL" id="BX897700">
    <property type="protein sequence ID" value="CAF26284.1"/>
    <property type="molecule type" value="Genomic_DNA"/>
</dbReference>
<dbReference type="RefSeq" id="WP_011179531.1">
    <property type="nucleotide sequence ID" value="NC_005955.1"/>
</dbReference>
<dbReference type="SMR" id="Q6FZE4"/>
<dbReference type="KEGG" id="bqu:BQ08010"/>
<dbReference type="eggNOG" id="COG0099">
    <property type="taxonomic scope" value="Bacteria"/>
</dbReference>
<dbReference type="HOGENOM" id="CLU_103849_1_2_5"/>
<dbReference type="OrthoDB" id="9803610at2"/>
<dbReference type="Proteomes" id="UP000000597">
    <property type="component" value="Chromosome"/>
</dbReference>
<dbReference type="GO" id="GO:0005829">
    <property type="term" value="C:cytosol"/>
    <property type="evidence" value="ECO:0007669"/>
    <property type="project" value="TreeGrafter"/>
</dbReference>
<dbReference type="GO" id="GO:0015935">
    <property type="term" value="C:small ribosomal subunit"/>
    <property type="evidence" value="ECO:0007669"/>
    <property type="project" value="TreeGrafter"/>
</dbReference>
<dbReference type="GO" id="GO:0019843">
    <property type="term" value="F:rRNA binding"/>
    <property type="evidence" value="ECO:0007669"/>
    <property type="project" value="UniProtKB-UniRule"/>
</dbReference>
<dbReference type="GO" id="GO:0003735">
    <property type="term" value="F:structural constituent of ribosome"/>
    <property type="evidence" value="ECO:0007669"/>
    <property type="project" value="InterPro"/>
</dbReference>
<dbReference type="GO" id="GO:0000049">
    <property type="term" value="F:tRNA binding"/>
    <property type="evidence" value="ECO:0007669"/>
    <property type="project" value="UniProtKB-UniRule"/>
</dbReference>
<dbReference type="GO" id="GO:0006412">
    <property type="term" value="P:translation"/>
    <property type="evidence" value="ECO:0007669"/>
    <property type="project" value="UniProtKB-UniRule"/>
</dbReference>
<dbReference type="FunFam" id="1.10.8.50:FF:000001">
    <property type="entry name" value="30S ribosomal protein S13"/>
    <property type="match status" value="1"/>
</dbReference>
<dbReference type="FunFam" id="4.10.910.10:FF:000001">
    <property type="entry name" value="30S ribosomal protein S13"/>
    <property type="match status" value="1"/>
</dbReference>
<dbReference type="Gene3D" id="1.10.8.50">
    <property type="match status" value="1"/>
</dbReference>
<dbReference type="Gene3D" id="4.10.910.10">
    <property type="entry name" value="30s ribosomal protein s13, domain 2"/>
    <property type="match status" value="1"/>
</dbReference>
<dbReference type="HAMAP" id="MF_01315">
    <property type="entry name" value="Ribosomal_uS13"/>
    <property type="match status" value="1"/>
</dbReference>
<dbReference type="InterPro" id="IPR027437">
    <property type="entry name" value="Rbsml_uS13_C"/>
</dbReference>
<dbReference type="InterPro" id="IPR001892">
    <property type="entry name" value="Ribosomal_uS13"/>
</dbReference>
<dbReference type="InterPro" id="IPR010979">
    <property type="entry name" value="Ribosomal_uS13-like_H2TH"/>
</dbReference>
<dbReference type="InterPro" id="IPR019980">
    <property type="entry name" value="Ribosomal_uS13_bac-type"/>
</dbReference>
<dbReference type="InterPro" id="IPR018269">
    <property type="entry name" value="Ribosomal_uS13_CS"/>
</dbReference>
<dbReference type="NCBIfam" id="TIGR03631">
    <property type="entry name" value="uS13_bact"/>
    <property type="match status" value="1"/>
</dbReference>
<dbReference type="PANTHER" id="PTHR10871">
    <property type="entry name" value="30S RIBOSOMAL PROTEIN S13/40S RIBOSOMAL PROTEIN S18"/>
    <property type="match status" value="1"/>
</dbReference>
<dbReference type="PANTHER" id="PTHR10871:SF1">
    <property type="entry name" value="SMALL RIBOSOMAL SUBUNIT PROTEIN US13M"/>
    <property type="match status" value="1"/>
</dbReference>
<dbReference type="Pfam" id="PF00416">
    <property type="entry name" value="Ribosomal_S13"/>
    <property type="match status" value="1"/>
</dbReference>
<dbReference type="PIRSF" id="PIRSF002134">
    <property type="entry name" value="Ribosomal_S13"/>
    <property type="match status" value="1"/>
</dbReference>
<dbReference type="SUPFAM" id="SSF46946">
    <property type="entry name" value="S13-like H2TH domain"/>
    <property type="match status" value="1"/>
</dbReference>
<dbReference type="PROSITE" id="PS00646">
    <property type="entry name" value="RIBOSOMAL_S13_1"/>
    <property type="match status" value="1"/>
</dbReference>
<dbReference type="PROSITE" id="PS50159">
    <property type="entry name" value="RIBOSOMAL_S13_2"/>
    <property type="match status" value="1"/>
</dbReference>
<evidence type="ECO:0000255" key="1">
    <source>
        <dbReference type="HAMAP-Rule" id="MF_01315"/>
    </source>
</evidence>
<evidence type="ECO:0000256" key="2">
    <source>
        <dbReference type="SAM" id="MobiDB-lite"/>
    </source>
</evidence>
<evidence type="ECO:0000305" key="3"/>
<accession>Q6FZE4</accession>
<comment type="function">
    <text evidence="1">Located at the top of the head of the 30S subunit, it contacts several helices of the 16S rRNA. In the 70S ribosome it contacts the 23S rRNA (bridge B1a) and protein L5 of the 50S subunit (bridge B1b), connecting the 2 subunits; these bridges are implicated in subunit movement. Contacts the tRNAs in the A and P-sites.</text>
</comment>
<comment type="subunit">
    <text evidence="1">Part of the 30S ribosomal subunit. Forms a loose heterodimer with protein S19. Forms two bridges to the 50S subunit in the 70S ribosome.</text>
</comment>
<comment type="similarity">
    <text evidence="1">Belongs to the universal ribosomal protein uS13 family.</text>
</comment>
<feature type="chain" id="PRO_0000230474" description="Small ribosomal subunit protein uS13">
    <location>
        <begin position="1"/>
        <end position="122"/>
    </location>
</feature>
<feature type="region of interest" description="Disordered" evidence="2">
    <location>
        <begin position="97"/>
        <end position="122"/>
    </location>
</feature>
<reference key="1">
    <citation type="journal article" date="2004" name="Proc. Natl. Acad. Sci. U.S.A.">
        <title>The louse-borne human pathogen Bartonella quintana is a genomic derivative of the zoonotic agent Bartonella henselae.</title>
        <authorList>
            <person name="Alsmark U.C.M."/>
            <person name="Frank A.C."/>
            <person name="Karlberg E.O."/>
            <person name="Legault B.-A."/>
            <person name="Ardell D.H."/>
            <person name="Canbaeck B."/>
            <person name="Eriksson A.-S."/>
            <person name="Naeslund A.K."/>
            <person name="Handley S.A."/>
            <person name="Huvet M."/>
            <person name="La Scola B."/>
            <person name="Holmberg M."/>
            <person name="Andersson S.G.E."/>
        </authorList>
    </citation>
    <scope>NUCLEOTIDE SEQUENCE [LARGE SCALE GENOMIC DNA]</scope>
    <source>
        <strain>Toulouse</strain>
    </source>
</reference>
<organism>
    <name type="scientific">Bartonella quintana (strain Toulouse)</name>
    <name type="common">Rochalimaea quintana</name>
    <dbReference type="NCBI Taxonomy" id="283165"/>
    <lineage>
        <taxon>Bacteria</taxon>
        <taxon>Pseudomonadati</taxon>
        <taxon>Pseudomonadota</taxon>
        <taxon>Alphaproteobacteria</taxon>
        <taxon>Hyphomicrobiales</taxon>
        <taxon>Bartonellaceae</taxon>
        <taxon>Bartonella</taxon>
    </lineage>
</organism>
<keyword id="KW-0687">Ribonucleoprotein</keyword>
<keyword id="KW-0689">Ribosomal protein</keyword>
<keyword id="KW-0694">RNA-binding</keyword>
<keyword id="KW-0699">rRNA-binding</keyword>
<keyword id="KW-0820">tRNA-binding</keyword>